<name>ORC4_XENLA</name>
<organism>
    <name type="scientific">Xenopus laevis</name>
    <name type="common">African clawed frog</name>
    <dbReference type="NCBI Taxonomy" id="8355"/>
    <lineage>
        <taxon>Eukaryota</taxon>
        <taxon>Metazoa</taxon>
        <taxon>Chordata</taxon>
        <taxon>Craniata</taxon>
        <taxon>Vertebrata</taxon>
        <taxon>Euteleostomi</taxon>
        <taxon>Amphibia</taxon>
        <taxon>Batrachia</taxon>
        <taxon>Anura</taxon>
        <taxon>Pipoidea</taxon>
        <taxon>Pipidae</taxon>
        <taxon>Xenopodinae</taxon>
        <taxon>Xenopus</taxon>
        <taxon>Xenopus</taxon>
    </lineage>
</organism>
<evidence type="ECO:0000250" key="1"/>
<evidence type="ECO:0000255" key="2"/>
<evidence type="ECO:0000305" key="3"/>
<protein>
    <recommendedName>
        <fullName>Origin recognition complex subunit 4</fullName>
    </recommendedName>
</protein>
<keyword id="KW-0067">ATP-binding</keyword>
<keyword id="KW-0235">DNA replication</keyword>
<keyword id="KW-0238">DNA-binding</keyword>
<keyword id="KW-0547">Nucleotide-binding</keyword>
<keyword id="KW-0539">Nucleus</keyword>
<keyword id="KW-1185">Reference proteome</keyword>
<sequence length="432" mass="49411">MSKRKSKDLCLPVGECISKVHGILRQRLFQHHGKPFGVDSQHKHLVELLKRTVIHGESNSALIIGPRGSGKSMLLKGALEDIFGMKQMKETALQVNLNGLLQTTDKIALKEITRQLHLENVVGDRVFGSFAENLSFLLEALKTGDRKSSCPVLFVLDEFDLFAHHKNQTLLYNLFDIAQSAQTPVAVIGLTCRLDVMELLEKRVKSRFSHRQIHLLNSFSFSQYLQIFQEKLSLPASFPDSQFAEKWNESIKSLVESKLVEDVLQKQYNASKDVRSLHMLMLLAVCRVNVSHPHITAADFLEVFRLRNQDSKANILHGVSVLELCLIIAMKHLQDIYDGEPFNFQMVHNEFQKFIQRKAHSVYNFEKAVVIKAFEHLHQLELIKPMEGLSVRTQKEYRLMKLLLDNTQIVEALQKYPNCPTDVKQWAMSSLS</sequence>
<feature type="chain" id="PRO_0000127089" description="Origin recognition complex subunit 4">
    <location>
        <begin position="1"/>
        <end position="432"/>
    </location>
</feature>
<feature type="binding site" evidence="2">
    <location>
        <begin position="65"/>
        <end position="72"/>
    </location>
    <ligand>
        <name>ATP</name>
        <dbReference type="ChEBI" id="CHEBI:30616"/>
    </ligand>
</feature>
<proteinExistence type="evidence at transcript level"/>
<dbReference type="EMBL" id="Y16385">
    <property type="protein sequence ID" value="CAA76187.1"/>
    <property type="molecule type" value="mRNA"/>
</dbReference>
<dbReference type="SMR" id="O93479"/>
<dbReference type="IntAct" id="O93479">
    <property type="interactions" value="2"/>
</dbReference>
<dbReference type="AGR" id="Xenbase:XB-GENE-1012486"/>
<dbReference type="Xenbase" id="XB-GENE-1012486">
    <property type="gene designation" value="orc4.L"/>
</dbReference>
<dbReference type="Proteomes" id="UP000186698">
    <property type="component" value="Unplaced"/>
</dbReference>
<dbReference type="GO" id="GO:0005664">
    <property type="term" value="C:nuclear origin of replication recognition complex"/>
    <property type="evidence" value="ECO:0000250"/>
    <property type="project" value="UniProtKB"/>
</dbReference>
<dbReference type="GO" id="GO:0005524">
    <property type="term" value="F:ATP binding"/>
    <property type="evidence" value="ECO:0007669"/>
    <property type="project" value="UniProtKB-KW"/>
</dbReference>
<dbReference type="GO" id="GO:0003688">
    <property type="term" value="F:DNA replication origin binding"/>
    <property type="evidence" value="ECO:0000318"/>
    <property type="project" value="GO_Central"/>
</dbReference>
<dbReference type="GO" id="GO:0006270">
    <property type="term" value="P:DNA replication initiation"/>
    <property type="evidence" value="ECO:0000318"/>
    <property type="project" value="GO_Central"/>
</dbReference>
<dbReference type="FunFam" id="3.40.50.300:FF:000649">
    <property type="entry name" value="Origin recognition complex subunit 4"/>
    <property type="match status" value="1"/>
</dbReference>
<dbReference type="Gene3D" id="3.40.50.300">
    <property type="entry name" value="P-loop containing nucleotide triphosphate hydrolases"/>
    <property type="match status" value="1"/>
</dbReference>
<dbReference type="InterPro" id="IPR041664">
    <property type="entry name" value="AAA_16"/>
</dbReference>
<dbReference type="InterPro" id="IPR016527">
    <property type="entry name" value="ORC4"/>
</dbReference>
<dbReference type="InterPro" id="IPR032705">
    <property type="entry name" value="ORC4_C"/>
</dbReference>
<dbReference type="InterPro" id="IPR027417">
    <property type="entry name" value="P-loop_NTPase"/>
</dbReference>
<dbReference type="PANTHER" id="PTHR12087">
    <property type="entry name" value="ORIGIN RECOGNITION COMPLEX SUBUNIT 4"/>
    <property type="match status" value="1"/>
</dbReference>
<dbReference type="PANTHER" id="PTHR12087:SF0">
    <property type="entry name" value="ORIGIN RECOGNITION COMPLEX SUBUNIT 4"/>
    <property type="match status" value="1"/>
</dbReference>
<dbReference type="Pfam" id="PF13191">
    <property type="entry name" value="AAA_16"/>
    <property type="match status" value="1"/>
</dbReference>
<dbReference type="Pfam" id="PF14629">
    <property type="entry name" value="ORC4_C"/>
    <property type="match status" value="1"/>
</dbReference>
<dbReference type="PIRSF" id="PIRSF007858">
    <property type="entry name" value="ORC4"/>
    <property type="match status" value="1"/>
</dbReference>
<dbReference type="SUPFAM" id="SSF52540">
    <property type="entry name" value="P-loop containing nucleoside triphosphate hydrolases"/>
    <property type="match status" value="1"/>
</dbReference>
<comment type="function">
    <text evidence="1">Component of the origin recognition complex (ORC) that binds origins of replication. DNA-binding is ATP-dependent, however specific DNA sequences that define origins of replication have not been identified so far. ORC is required to assemble the pre-replication complex necessary to initiate DNA replication (By similarity).</text>
</comment>
<comment type="subunit">
    <text evidence="1">ORC is composed of six subunits.</text>
</comment>
<comment type="subcellular location">
    <subcellularLocation>
        <location>Nucleus</location>
    </subcellularLocation>
</comment>
<comment type="similarity">
    <text evidence="3">Belongs to the ORC4 family.</text>
</comment>
<gene>
    <name type="primary">orc4</name>
    <name type="synonym">orc4l</name>
</gene>
<reference key="1">
    <citation type="submission" date="1998-02" db="EMBL/GenBank/DDBJ databases">
        <title>Identification of the Orc4p and Orc5p subunits of the Xenopus and human origin recognition complex.</title>
        <authorList>
            <person name="Komrskova T."/>
            <person name="Yang H."/>
            <person name="Gavin K."/>
            <person name="Pappin P."/>
            <person name="Canas B."/>
            <person name="Kobayashi R."/>
            <person name="Hunt T."/>
            <person name="Stillman B."/>
        </authorList>
    </citation>
    <scope>NUCLEOTIDE SEQUENCE [MRNA]</scope>
    <source>
        <tissue>Ovary</tissue>
    </source>
</reference>
<accession>O93479</accession>